<comment type="function">
    <text evidence="1">Part of the high-affinity ATP-driven potassium transport (or Kdp) system, which catalyzes the hydrolysis of ATP coupled with the electrogenic transport of potassium into the cytoplasm. This subunit binds the periplasmic potassium ions and delivers the ions to the membrane domain of KdpB through an intramembrane tunnel.</text>
</comment>
<comment type="subunit">
    <text evidence="1">The system is composed of three essential subunits: KdpA, KdpB and KdpC.</text>
</comment>
<comment type="subcellular location">
    <subcellularLocation>
        <location evidence="1">Cell inner membrane</location>
        <topology evidence="1">Multi-pass membrane protein</topology>
    </subcellularLocation>
</comment>
<comment type="similarity">
    <text evidence="1">Belongs to the KdpA family.</text>
</comment>
<organism>
    <name type="scientific">Nostoc sp. (strain PCC 7120 / SAG 25.82 / UTEX 2576)</name>
    <dbReference type="NCBI Taxonomy" id="103690"/>
    <lineage>
        <taxon>Bacteria</taxon>
        <taxon>Bacillati</taxon>
        <taxon>Cyanobacteriota</taxon>
        <taxon>Cyanophyceae</taxon>
        <taxon>Nostocales</taxon>
        <taxon>Nostocaceae</taxon>
        <taxon>Nostoc</taxon>
    </lineage>
</organism>
<protein>
    <recommendedName>
        <fullName evidence="1">Potassium-transporting ATPase potassium-binding subunit</fullName>
    </recommendedName>
    <alternativeName>
        <fullName evidence="1">ATP phosphohydrolase [potassium-transporting] A chain</fullName>
    </alternativeName>
    <alternativeName>
        <fullName evidence="1">Potassium-binding and translocating subunit A</fullName>
    </alternativeName>
    <alternativeName>
        <fullName evidence="1">Potassium-translocating ATPase A chain</fullName>
    </alternativeName>
</protein>
<keyword id="KW-0997">Cell inner membrane</keyword>
<keyword id="KW-1003">Cell membrane</keyword>
<keyword id="KW-0406">Ion transport</keyword>
<keyword id="KW-0472">Membrane</keyword>
<keyword id="KW-0630">Potassium</keyword>
<keyword id="KW-0633">Potassium transport</keyword>
<keyword id="KW-1185">Reference proteome</keyword>
<keyword id="KW-0812">Transmembrane</keyword>
<keyword id="KW-1133">Transmembrane helix</keyword>
<keyword id="KW-0813">Transport</keyword>
<sequence>MGQGLLQIGLTLCIVIAITPVLGRYIARVFLGERTILDRVMNPIERSVYVISGVRPKDEMTGWQYIRAILYTNLFMGILVYSLIYFQRLLPWNPNGLGVPSWDIVLHTVISFVTNTDQQHYAGETTLSYFSQVAALGFLMFTSAATGLAVGIAFIRGLTGRKLGNFYVDLTRGITRILLPISVIGAIALVLLGVPQTIGETLTITTLEGGTQYIARGPVASFEMIKMLGENGGGFFAANSAHPFENPNGLTNLIETIAMIAIPAAMIYTYGVFAKNIKQAWLLFWMVFIVFVILVWVAAGGELQGNPLVNGTLGIEQPNLEGKEVRFGWAETALWAVMTTATMCGAVNGMHDSLMPQGLFATLFNLFLQIIWGGQGTGTAYLFIYLILTVFLTGLMVGRTPEIFGRKIEKREIVLASLILLIHPIVVLIPSAIALAYPFSLSGISNPSFHGISQVVYEYASASANNGSGLEGLTDNSLWWNLSTSLSILTGRYVPIIAMLLLADSMSRKQTVPQTPGTLKTDSLIFTTVTAGIVLILGVLTFFPVLALGPIAEGFKLASGS</sequence>
<gene>
    <name evidence="1" type="primary">kdpA</name>
    <name type="ordered locus">all4246</name>
</gene>
<name>KDPA_NOSS1</name>
<reference key="1">
    <citation type="journal article" date="2001" name="DNA Res.">
        <title>Complete genomic sequence of the filamentous nitrogen-fixing cyanobacterium Anabaena sp. strain PCC 7120.</title>
        <authorList>
            <person name="Kaneko T."/>
            <person name="Nakamura Y."/>
            <person name="Wolk C.P."/>
            <person name="Kuritz T."/>
            <person name="Sasamoto S."/>
            <person name="Watanabe A."/>
            <person name="Iriguchi M."/>
            <person name="Ishikawa A."/>
            <person name="Kawashima K."/>
            <person name="Kimura T."/>
            <person name="Kishida Y."/>
            <person name="Kohara M."/>
            <person name="Matsumoto M."/>
            <person name="Matsuno A."/>
            <person name="Muraki A."/>
            <person name="Nakazaki N."/>
            <person name="Shimpo S."/>
            <person name="Sugimoto M."/>
            <person name="Takazawa M."/>
            <person name="Yamada M."/>
            <person name="Yasuda M."/>
            <person name="Tabata S."/>
        </authorList>
    </citation>
    <scope>NUCLEOTIDE SEQUENCE [LARGE SCALE GENOMIC DNA]</scope>
    <source>
        <strain>PCC 7120 / SAG 25.82 / UTEX 2576</strain>
    </source>
</reference>
<proteinExistence type="inferred from homology"/>
<evidence type="ECO:0000255" key="1">
    <source>
        <dbReference type="HAMAP-Rule" id="MF_00275"/>
    </source>
</evidence>
<dbReference type="EMBL" id="BA000019">
    <property type="protein sequence ID" value="BAB75945.1"/>
    <property type="molecule type" value="Genomic_DNA"/>
</dbReference>
<dbReference type="PIR" id="AG2336">
    <property type="entry name" value="AG2336"/>
</dbReference>
<dbReference type="RefSeq" id="WP_010998384.1">
    <property type="nucleotide sequence ID" value="NZ_RSCN01000010.1"/>
</dbReference>
<dbReference type="SMR" id="Q8YPE8"/>
<dbReference type="STRING" id="103690.gene:10496295"/>
<dbReference type="KEGG" id="ana:all4246"/>
<dbReference type="eggNOG" id="COG2060">
    <property type="taxonomic scope" value="Bacteria"/>
</dbReference>
<dbReference type="OrthoDB" id="9763796at2"/>
<dbReference type="Proteomes" id="UP000002483">
    <property type="component" value="Chromosome"/>
</dbReference>
<dbReference type="GO" id="GO:0005886">
    <property type="term" value="C:plasma membrane"/>
    <property type="evidence" value="ECO:0007669"/>
    <property type="project" value="UniProtKB-SubCell"/>
</dbReference>
<dbReference type="GO" id="GO:0008556">
    <property type="term" value="F:P-type potassium transmembrane transporter activity"/>
    <property type="evidence" value="ECO:0007669"/>
    <property type="project" value="InterPro"/>
</dbReference>
<dbReference type="GO" id="GO:0030955">
    <property type="term" value="F:potassium ion binding"/>
    <property type="evidence" value="ECO:0007669"/>
    <property type="project" value="UniProtKB-UniRule"/>
</dbReference>
<dbReference type="HAMAP" id="MF_00275">
    <property type="entry name" value="KdpA"/>
    <property type="match status" value="1"/>
</dbReference>
<dbReference type="InterPro" id="IPR004623">
    <property type="entry name" value="KdpA"/>
</dbReference>
<dbReference type="NCBIfam" id="TIGR00680">
    <property type="entry name" value="kdpA"/>
    <property type="match status" value="1"/>
</dbReference>
<dbReference type="PANTHER" id="PTHR30607">
    <property type="entry name" value="POTASSIUM-TRANSPORTING ATPASE A CHAIN"/>
    <property type="match status" value="1"/>
</dbReference>
<dbReference type="PANTHER" id="PTHR30607:SF2">
    <property type="entry name" value="POTASSIUM-TRANSPORTING ATPASE POTASSIUM-BINDING SUBUNIT"/>
    <property type="match status" value="1"/>
</dbReference>
<dbReference type="Pfam" id="PF03814">
    <property type="entry name" value="KdpA"/>
    <property type="match status" value="1"/>
</dbReference>
<dbReference type="PIRSF" id="PIRSF001294">
    <property type="entry name" value="K_ATPaseA"/>
    <property type="match status" value="1"/>
</dbReference>
<feature type="chain" id="PRO_0000166476" description="Potassium-transporting ATPase potassium-binding subunit">
    <location>
        <begin position="1"/>
        <end position="561"/>
    </location>
</feature>
<feature type="transmembrane region" description="Helical" evidence="1">
    <location>
        <begin position="2"/>
        <end position="22"/>
    </location>
</feature>
<feature type="transmembrane region" description="Helical" evidence="1">
    <location>
        <begin position="66"/>
        <end position="86"/>
    </location>
</feature>
<feature type="transmembrane region" description="Helical" evidence="1">
    <location>
        <begin position="135"/>
        <end position="155"/>
    </location>
</feature>
<feature type="transmembrane region" description="Helical" evidence="1">
    <location>
        <begin position="177"/>
        <end position="197"/>
    </location>
</feature>
<feature type="transmembrane region" description="Helical" evidence="1">
    <location>
        <begin position="253"/>
        <end position="273"/>
    </location>
</feature>
<feature type="transmembrane region" description="Helical" evidence="1">
    <location>
        <begin position="280"/>
        <end position="300"/>
    </location>
</feature>
<feature type="transmembrane region" description="Helical" evidence="1">
    <location>
        <begin position="327"/>
        <end position="347"/>
    </location>
</feature>
<feature type="transmembrane region" description="Helical" evidence="1">
    <location>
        <begin position="354"/>
        <end position="374"/>
    </location>
</feature>
<feature type="transmembrane region" description="Helical" evidence="1">
    <location>
        <begin position="378"/>
        <end position="398"/>
    </location>
</feature>
<feature type="transmembrane region" description="Helical" evidence="1">
    <location>
        <begin position="413"/>
        <end position="433"/>
    </location>
</feature>
<feature type="transmembrane region" description="Helical" evidence="1">
    <location>
        <begin position="482"/>
        <end position="502"/>
    </location>
</feature>
<feature type="transmembrane region" description="Helical" evidence="1">
    <location>
        <begin position="531"/>
        <end position="551"/>
    </location>
</feature>
<accession>Q8YPE8</accession>